<gene>
    <name type="primary">htpX</name>
    <name type="ordered locus">Z2876</name>
    <name type="ordered locus">ECs2539</name>
</gene>
<reference key="1">
    <citation type="journal article" date="2001" name="Nature">
        <title>Genome sequence of enterohaemorrhagic Escherichia coli O157:H7.</title>
        <authorList>
            <person name="Perna N.T."/>
            <person name="Plunkett G. III"/>
            <person name="Burland V."/>
            <person name="Mau B."/>
            <person name="Glasner J.D."/>
            <person name="Rose D.J."/>
            <person name="Mayhew G.F."/>
            <person name="Evans P.S."/>
            <person name="Gregor J."/>
            <person name="Kirkpatrick H.A."/>
            <person name="Posfai G."/>
            <person name="Hackett J."/>
            <person name="Klink S."/>
            <person name="Boutin A."/>
            <person name="Shao Y."/>
            <person name="Miller L."/>
            <person name="Grotbeck E.J."/>
            <person name="Davis N.W."/>
            <person name="Lim A."/>
            <person name="Dimalanta E.T."/>
            <person name="Potamousis K."/>
            <person name="Apodaca J."/>
            <person name="Anantharaman T.S."/>
            <person name="Lin J."/>
            <person name="Yen G."/>
            <person name="Schwartz D.C."/>
            <person name="Welch R.A."/>
            <person name="Blattner F.R."/>
        </authorList>
    </citation>
    <scope>NUCLEOTIDE SEQUENCE [LARGE SCALE GENOMIC DNA]</scope>
    <source>
        <strain>O157:H7 / EDL933 / ATCC 700927 / EHEC</strain>
    </source>
</reference>
<reference key="2">
    <citation type="journal article" date="2001" name="DNA Res.">
        <title>Complete genome sequence of enterohemorrhagic Escherichia coli O157:H7 and genomic comparison with a laboratory strain K-12.</title>
        <authorList>
            <person name="Hayashi T."/>
            <person name="Makino K."/>
            <person name="Ohnishi M."/>
            <person name="Kurokawa K."/>
            <person name="Ishii K."/>
            <person name="Yokoyama K."/>
            <person name="Han C.-G."/>
            <person name="Ohtsubo E."/>
            <person name="Nakayama K."/>
            <person name="Murata T."/>
            <person name="Tanaka M."/>
            <person name="Tobe T."/>
            <person name="Iida T."/>
            <person name="Takami H."/>
            <person name="Honda T."/>
            <person name="Sasakawa C."/>
            <person name="Ogasawara N."/>
            <person name="Yasunaga T."/>
            <person name="Kuhara S."/>
            <person name="Shiba T."/>
            <person name="Hattori M."/>
            <person name="Shinagawa H."/>
        </authorList>
    </citation>
    <scope>NUCLEOTIDE SEQUENCE [LARGE SCALE GENOMIC DNA]</scope>
    <source>
        <strain>O157:H7 / Sakai / RIMD 0509952 / EHEC</strain>
    </source>
</reference>
<reference key="3">
    <citation type="journal article" date="2009" name="Appl. Environ. Microbiol.">
        <title>Gene expression induced in Escherichia coli O157:H7 upon exposure to model apple juice.</title>
        <authorList>
            <person name="Bergholz T.M."/>
            <person name="Vanaja S.K."/>
            <person name="Whittam T.S."/>
        </authorList>
    </citation>
    <scope>INDUCTION BY ACIDITY</scope>
    <source>
        <strain>O157:H7 / Sakai / RIMD 0509952 / EHEC</strain>
    </source>
</reference>
<protein>
    <recommendedName>
        <fullName>Protease HtpX</fullName>
        <ecNumber>3.4.24.-</ecNumber>
    </recommendedName>
    <alternativeName>
        <fullName>Heat shock protein HtpX</fullName>
    </alternativeName>
</protein>
<name>HTPX_ECO57</name>
<feature type="chain" id="PRO_0000138862" description="Protease HtpX">
    <location>
        <begin position="1"/>
        <end position="293"/>
    </location>
</feature>
<feature type="topological domain" description="Cytoplasmic" evidence="2">
    <location>
        <begin position="1"/>
        <end position="3"/>
    </location>
</feature>
<feature type="transmembrane region" description="Helical" evidence="2">
    <location>
        <begin position="4"/>
        <end position="24"/>
    </location>
</feature>
<feature type="topological domain" description="Periplasmic" evidence="2">
    <location>
        <begin position="25"/>
        <end position="33"/>
    </location>
</feature>
<feature type="transmembrane region" description="Helical" evidence="2">
    <location>
        <begin position="34"/>
        <end position="54"/>
    </location>
</feature>
<feature type="topological domain" description="Cytoplasmic" evidence="2">
    <location>
        <begin position="55"/>
        <end position="157"/>
    </location>
</feature>
<feature type="transmembrane region" description="Helical" evidence="2">
    <location>
        <begin position="158"/>
        <end position="178"/>
    </location>
</feature>
<feature type="topological domain" description="Periplasmic" evidence="2">
    <location>
        <begin position="179"/>
        <end position="192"/>
    </location>
</feature>
<feature type="transmembrane region" description="Helical" evidence="2">
    <location>
        <begin position="193"/>
        <end position="213"/>
    </location>
</feature>
<feature type="topological domain" description="Cytoplasmic" evidence="2">
    <location>
        <begin position="214"/>
        <end position="293"/>
    </location>
</feature>
<feature type="active site" evidence="1">
    <location>
        <position position="140"/>
    </location>
</feature>
<feature type="binding site" evidence="1">
    <location>
        <position position="139"/>
    </location>
    <ligand>
        <name>Zn(2+)</name>
        <dbReference type="ChEBI" id="CHEBI:29105"/>
        <note>catalytic</note>
    </ligand>
</feature>
<feature type="binding site" evidence="1">
    <location>
        <position position="143"/>
    </location>
    <ligand>
        <name>Zn(2+)</name>
        <dbReference type="ChEBI" id="CHEBI:29105"/>
        <note>catalytic</note>
    </ligand>
</feature>
<feature type="binding site" evidence="1">
    <location>
        <position position="222"/>
    </location>
    <ligand>
        <name>Zn(2+)</name>
        <dbReference type="ChEBI" id="CHEBI:29105"/>
        <note>catalytic</note>
    </ligand>
</feature>
<organism>
    <name type="scientific">Escherichia coli O157:H7</name>
    <dbReference type="NCBI Taxonomy" id="83334"/>
    <lineage>
        <taxon>Bacteria</taxon>
        <taxon>Pseudomonadati</taxon>
        <taxon>Pseudomonadota</taxon>
        <taxon>Gammaproteobacteria</taxon>
        <taxon>Enterobacterales</taxon>
        <taxon>Enterobacteriaceae</taxon>
        <taxon>Escherichia</taxon>
    </lineage>
</organism>
<accession>P65813</accession>
<accession>Q8XCN0</accession>
<comment type="cofactor">
    <cofactor evidence="1">
        <name>Zn(2+)</name>
        <dbReference type="ChEBI" id="CHEBI:29105"/>
    </cofactor>
    <text evidence="1">Binds 1 zinc ion per subunit.</text>
</comment>
<comment type="subcellular location">
    <subcellularLocation>
        <location evidence="1">Cell inner membrane</location>
        <topology evidence="1">Multi-pass membrane protein</topology>
    </subcellularLocation>
</comment>
<comment type="induction">
    <text evidence="3">More highly expressed in exponential than stationary phase, it is induced 2-fold in response to model apple juice (pH 3.5).</text>
</comment>
<comment type="similarity">
    <text evidence="4">Belongs to the peptidase M48B family.</text>
</comment>
<sequence>MMRIALFLLTNLAVMVVFGLVLSLTGIQSSSVQGLMIMALLFGFGGSFVSLLMSKWMALRSVGGEVIEQPRNERERWLVNTVATQARQAGIAMPQVAIYHAPDINAFATGARRDASLVAVSTGLLQNMSPDEAEAVIAHEISHIANGDMVTMTLIQGVVNTFVIFISRILAQLAAGFMGGNRDEGEESNGNPLIYFAVATVLELVFGILASIITMWFSRHREFHADAGSAKLVGREKMIAALQRLKTSYEPQEATSMMAFCINGKSKSLSELFMTHPPLDKRIEALRTGEYLK</sequence>
<dbReference type="EC" id="3.4.24.-"/>
<dbReference type="EMBL" id="AE005174">
    <property type="protein sequence ID" value="AAG56819.1"/>
    <property type="molecule type" value="Genomic_DNA"/>
</dbReference>
<dbReference type="EMBL" id="BA000007">
    <property type="protein sequence ID" value="BAB35962.1"/>
    <property type="molecule type" value="Genomic_DNA"/>
</dbReference>
<dbReference type="PIR" id="C90946">
    <property type="entry name" value="C90946"/>
</dbReference>
<dbReference type="PIR" id="G85794">
    <property type="entry name" value="G85794"/>
</dbReference>
<dbReference type="RefSeq" id="NP_310566.1">
    <property type="nucleotide sequence ID" value="NC_002695.1"/>
</dbReference>
<dbReference type="RefSeq" id="WP_000984517.1">
    <property type="nucleotide sequence ID" value="NZ_VOAI01000010.1"/>
</dbReference>
<dbReference type="SMR" id="P65813"/>
<dbReference type="STRING" id="155864.Z2876"/>
<dbReference type="MEROPS" id="M48.002"/>
<dbReference type="GeneID" id="912682"/>
<dbReference type="GeneID" id="93776079"/>
<dbReference type="KEGG" id="ece:Z2876"/>
<dbReference type="KEGG" id="ecs:ECs_2539"/>
<dbReference type="PATRIC" id="fig|386585.9.peg.2662"/>
<dbReference type="eggNOG" id="COG0501">
    <property type="taxonomic scope" value="Bacteria"/>
</dbReference>
<dbReference type="HOGENOM" id="CLU_042266_1_0_6"/>
<dbReference type="OMA" id="AVCCTEG"/>
<dbReference type="Proteomes" id="UP000000558">
    <property type="component" value="Chromosome"/>
</dbReference>
<dbReference type="Proteomes" id="UP000002519">
    <property type="component" value="Chromosome"/>
</dbReference>
<dbReference type="GO" id="GO:0005886">
    <property type="term" value="C:plasma membrane"/>
    <property type="evidence" value="ECO:0007669"/>
    <property type="project" value="UniProtKB-SubCell"/>
</dbReference>
<dbReference type="GO" id="GO:0004222">
    <property type="term" value="F:metalloendopeptidase activity"/>
    <property type="evidence" value="ECO:0007669"/>
    <property type="project" value="UniProtKB-UniRule"/>
</dbReference>
<dbReference type="GO" id="GO:0008270">
    <property type="term" value="F:zinc ion binding"/>
    <property type="evidence" value="ECO:0007669"/>
    <property type="project" value="UniProtKB-UniRule"/>
</dbReference>
<dbReference type="GO" id="GO:0006508">
    <property type="term" value="P:proteolysis"/>
    <property type="evidence" value="ECO:0007669"/>
    <property type="project" value="UniProtKB-KW"/>
</dbReference>
<dbReference type="CDD" id="cd07335">
    <property type="entry name" value="M48B_HtpX_like"/>
    <property type="match status" value="1"/>
</dbReference>
<dbReference type="FunFam" id="3.30.2010.10:FF:000001">
    <property type="entry name" value="Protease HtpX"/>
    <property type="match status" value="1"/>
</dbReference>
<dbReference type="Gene3D" id="3.30.2010.10">
    <property type="entry name" value="Metalloproteases ('zincins'), catalytic domain"/>
    <property type="match status" value="1"/>
</dbReference>
<dbReference type="HAMAP" id="MF_00188">
    <property type="entry name" value="Pept_M48_protease_HtpX"/>
    <property type="match status" value="1"/>
</dbReference>
<dbReference type="InterPro" id="IPR050083">
    <property type="entry name" value="HtpX_protease"/>
</dbReference>
<dbReference type="InterPro" id="IPR022919">
    <property type="entry name" value="Pept_M48_protease_HtpX"/>
</dbReference>
<dbReference type="InterPro" id="IPR001915">
    <property type="entry name" value="Peptidase_M48"/>
</dbReference>
<dbReference type="NCBIfam" id="NF003965">
    <property type="entry name" value="PRK05457.1"/>
    <property type="match status" value="1"/>
</dbReference>
<dbReference type="PANTHER" id="PTHR43221">
    <property type="entry name" value="PROTEASE HTPX"/>
    <property type="match status" value="1"/>
</dbReference>
<dbReference type="PANTHER" id="PTHR43221:SF1">
    <property type="entry name" value="PROTEASE HTPX"/>
    <property type="match status" value="1"/>
</dbReference>
<dbReference type="Pfam" id="PF01435">
    <property type="entry name" value="Peptidase_M48"/>
    <property type="match status" value="1"/>
</dbReference>
<proteinExistence type="evidence at transcript level"/>
<evidence type="ECO:0000250" key="1"/>
<evidence type="ECO:0000255" key="2"/>
<evidence type="ECO:0000269" key="3">
    <source>
    </source>
</evidence>
<evidence type="ECO:0000305" key="4"/>
<keyword id="KW-0997">Cell inner membrane</keyword>
<keyword id="KW-1003">Cell membrane</keyword>
<keyword id="KW-0378">Hydrolase</keyword>
<keyword id="KW-0472">Membrane</keyword>
<keyword id="KW-0479">Metal-binding</keyword>
<keyword id="KW-0482">Metalloprotease</keyword>
<keyword id="KW-0645">Protease</keyword>
<keyword id="KW-1185">Reference proteome</keyword>
<keyword id="KW-0812">Transmembrane</keyword>
<keyword id="KW-1133">Transmembrane helix</keyword>
<keyword id="KW-0862">Zinc</keyword>